<proteinExistence type="evidence at protein level"/>
<sequence>MYSFNTLRLYLWETIVFFSLAASKEAEAARSAPKPMSPSDFLDKLMGRTSGYDARIRPNFKGPPVNVSCNIFINSFGSIAETTMDYRVNIFLRQQWNDPRLAYNEYPDDSLDLDPSMLDSIWKPDLFFANEKGAHFHEITTDNKLLRISRNGNVLYSIRITLTLACPMDLKNFPMDVQTCIMQLESFGYTMNDLIFEWQEQGAVQVADGLTLPQFILKEEKDLRYCTKHYNTGKFTCIEARFHLERQMGYYLIQMYIPSLLIVILSWISFWINMDAAPARVGLGITTVLTMTTQSSGSRASLPKVSYVKAIDIWMAVCLLFVFSALLEYAAVNFVSRQHKELLRFRRKRRHHKSPMLNLFQEDEAGEGRFNFSAYGMGPACLQAKDGISVKGANNSNTTNPPPAPSKSPEEMRKLFIQRAKKIDKISRIGFPMAFLIFNMFYWIIYKIVRREDVHNQ</sequence>
<feature type="signal peptide" evidence="2 4">
    <location>
        <begin position="1"/>
        <end position="28"/>
    </location>
</feature>
<feature type="chain" id="PRO_0000000412" description="Glycine receptor subunit alpha-1">
    <location>
        <begin position="29"/>
        <end position="457"/>
    </location>
</feature>
<feature type="topological domain" description="Extracellular" evidence="35">
    <location>
        <begin position="29"/>
        <end position="250"/>
    </location>
</feature>
<feature type="transmembrane region" description="Helical; Name=1" evidence="13 16">
    <location>
        <begin position="251"/>
        <end position="272"/>
    </location>
</feature>
<feature type="topological domain" description="Cytoplasmic" evidence="13 16">
    <location>
        <begin position="273"/>
        <end position="277"/>
    </location>
</feature>
<feature type="transmembrane region" description="Helical; Name=2" evidence="13 16">
    <location>
        <begin position="278"/>
        <end position="298"/>
    </location>
</feature>
<feature type="topological domain" description="Extracellular" evidence="13 16">
    <location>
        <begin position="299"/>
        <end position="309"/>
    </location>
</feature>
<feature type="transmembrane region" description="Helical; Name=3" evidence="13 16">
    <location>
        <begin position="310"/>
        <end position="330"/>
    </location>
</feature>
<feature type="topological domain" description="Cytoplasmic" evidence="13">
    <location>
        <begin position="331"/>
        <end position="425"/>
    </location>
</feature>
<feature type="transmembrane region" description="Helical; Name=4" evidence="13">
    <location>
        <begin position="426"/>
        <end position="446"/>
    </location>
</feature>
<feature type="topological domain" description="Extracellular" evidence="35">
    <location>
        <begin position="447"/>
        <end position="457"/>
    </location>
</feature>
<feature type="region of interest" description="Disordered" evidence="5">
    <location>
        <begin position="391"/>
        <end position="410"/>
    </location>
</feature>
<feature type="binding site" evidence="19 42">
    <location>
        <position position="93"/>
    </location>
    <ligand>
        <name>glycine</name>
        <dbReference type="ChEBI" id="CHEBI:57305"/>
        <label>1</label>
        <note>agonist</note>
    </ligand>
</feature>
<feature type="binding site" evidence="19 42">
    <location>
        <position position="157"/>
    </location>
    <ligand>
        <name>glycine</name>
        <dbReference type="ChEBI" id="CHEBI:57305"/>
        <label>1</label>
        <note>agonist</note>
    </ligand>
</feature>
<feature type="binding site" evidence="36">
    <location>
        <position position="220"/>
    </location>
    <ligand>
        <name>Zn(2+)</name>
        <dbReference type="ChEBI" id="CHEBI:29105"/>
    </ligand>
</feature>
<feature type="binding site" evidence="36">
    <location>
        <position position="222"/>
    </location>
    <ligand>
        <name>Zn(2+)</name>
        <dbReference type="ChEBI" id="CHEBI:29105"/>
    </ligand>
</feature>
<feature type="binding site" evidence="1">
    <location>
        <begin position="230"/>
        <end position="235"/>
    </location>
    <ligand>
        <name>strychnine</name>
        <dbReference type="ChEBI" id="CHEBI:90700"/>
        <note>antagonist</note>
    </ligand>
</feature>
<feature type="binding site" evidence="19 42">
    <location>
        <position position="232"/>
    </location>
    <ligand>
        <name>glycine</name>
        <dbReference type="ChEBI" id="CHEBI:57305"/>
        <label>2</label>
        <note>agonist; ligand shared with an adjacent GLRB subunit</note>
    </ligand>
</feature>
<feature type="binding site" evidence="36">
    <location>
        <position position="243"/>
    </location>
    <ligand>
        <name>Zn(2+)</name>
        <dbReference type="ChEBI" id="CHEBI:29105"/>
    </ligand>
</feature>
<feature type="site" description="Important for obstruction of the ion pore in the closed conformation" evidence="16">
    <location>
        <position position="289"/>
    </location>
</feature>
<feature type="glycosylation site" description="N-linked (GlcNAc...) asparagine" evidence="35">
    <location>
        <position position="66"/>
    </location>
</feature>
<feature type="disulfide bond" evidence="9">
    <location>
        <begin position="166"/>
        <end position="180"/>
    </location>
</feature>
<feature type="disulfide bond" evidence="9">
    <location>
        <begin position="226"/>
        <end position="237"/>
    </location>
</feature>
<feature type="splice variant" id="VSP_021142" description="In isoform b." evidence="32 33 34">
    <location>
        <begin position="354"/>
        <end position="361"/>
    </location>
</feature>
<feature type="sequence variant" id="VAR_075418" description="In HKPX1; impairs expression at the cell membrane; requires much higher glycine levels for channel activation; dbSNP:rs199547699." evidence="14">
    <original>R</original>
    <variation>W</variation>
    <location>
        <position position="93"/>
    </location>
</feature>
<feature type="sequence variant" id="VAR_075419" description="In HKPX1; abolishes expression at the cell membrane; requires much higher glycine levels for channel activation; dbSNP:rs1581623910." evidence="14">
    <original>R</original>
    <variation>C</variation>
    <location>
        <position position="100"/>
    </location>
</feature>
<feature type="sequence variant" id="VAR_075420" description="In HKPX1; abolishes expression at the cell membrane; requires much higher glycine levels for channel activation; dbSNP:rs751659671." evidence="14">
    <original>R</original>
    <variation>W</variation>
    <location>
        <position position="246"/>
    </location>
</feature>
<feature type="sequence variant" id="VAR_075421" description="In HKPX1; strongly increases sensitivity to extracellular glycine; high leak currents in the absence of glycine due to spontaneous channel opening." evidence="14 16">
    <original>Q</original>
    <variation>E</variation>
    <location>
        <position position="254"/>
    </location>
</feature>
<feature type="sequence variant" id="VAR_075422" description="In HKPX1; impairs expression at the cell membrane; requires much higher glycine levels for channel activation." evidence="14">
    <original>P</original>
    <variation>S</variation>
    <location>
        <position position="258"/>
    </location>
</feature>
<feature type="sequence variant" id="VAR_000296" description="In HKPX1; requires much higher glycine levels for channel activation; dbSNP:rs121918409." evidence="21 28">
    <original>I</original>
    <variation>N</variation>
    <location>
        <position position="272"/>
    </location>
</feature>
<feature type="sequence variant" id="VAR_010112" description="In HKPX1; requires much higher glycine levels for channel activation and displays an increased rate of desensitization; dbSNP:rs121918413." evidence="16 30">
    <original>P</original>
    <variation>T</variation>
    <location>
        <position position="278"/>
    </location>
</feature>
<feature type="sequence variant" id="VAR_010113" description="In HKPX1; dbSNP:rs281864918." evidence="6">
    <original>R</original>
    <variation>H</variation>
    <location>
        <position position="280"/>
    </location>
</feature>
<feature type="sequence variant" id="VAR_000297" description="In HKPX1; dbSNP:rs121918411." evidence="26">
    <original>Q</original>
    <variation>H</variation>
    <location>
        <position position="294"/>
    </location>
</feature>
<feature type="sequence variant" id="VAR_000298" description="In HKPX1; requires much higher glycine levels for channel activation; dbSNP:rs121918408." evidence="23 24 25 28">
    <original>R</original>
    <variation>L</variation>
    <location>
        <position position="299"/>
    </location>
</feature>
<feature type="sequence variant" id="VAR_000299" description="In HKPX1; decreases unitary channel conductance and requires much higher glycine concentrations for activation; dbSNP:rs121918408." evidence="16 23 25 28">
    <original>R</original>
    <variation>Q</variation>
    <location>
        <position position="299"/>
    </location>
</feature>
<feature type="sequence variant" id="VAR_000300" description="In HKPX1; requires much higher glycine levels for channel activation; dbSNP:rs121918412." evidence="27 28 29">
    <original>K</original>
    <variation>E</variation>
    <location>
        <position position="304"/>
    </location>
</feature>
<feature type="sequence variant" id="VAR_000301" description="In HKPX1; requires much higher glycine levels for channel activation; dbSNP:rs121918410." evidence="20 28 31">
    <original>Y</original>
    <variation>C</variation>
    <location>
        <position position="307"/>
    </location>
</feature>
<feature type="sequence variant" id="VAR_075423" description="In HKPX1; high leak currents in the absence of glycine due to spontaneous channel opening." evidence="14 16">
    <original>V</original>
    <variation>M</variation>
    <location>
        <position position="308"/>
    </location>
</feature>
<feature type="sequence variant" id="VAR_075424" description="In HKPX1; impairs expression at the cell membrane; requires much higher glycine levels for channel activation." evidence="14">
    <original>L</original>
    <variation>P</variation>
    <location>
        <position position="319"/>
    </location>
</feature>
<feature type="sequence variant" id="VAR_075425" description="In HKPX1; abolishes expression at the cell membrane." evidence="14">
    <original>D</original>
    <variation>A</variation>
    <location>
        <position position="424"/>
    </location>
</feature>
<feature type="sequence variant" id="VAR_010114" description="In HKPX1; dbSNP:rs281864919." evidence="6">
    <original>R</original>
    <variation>H</variation>
    <location>
        <position position="428"/>
    </location>
</feature>
<feature type="sequence variant" id="VAR_075426" description="In HKPX1; displays leak currents in the absence of glycine due to spontaneous channel opening; dbSNP:rs200130685." evidence="14">
    <original>R</original>
    <variation>H</variation>
    <location>
        <position position="450"/>
    </location>
</feature>
<feature type="mutagenesis site" description="The mutant channel requires much higher glycine concentrations for activation." evidence="22">
    <original>A</original>
    <variation>S</variation>
    <location>
        <position position="80"/>
    </location>
</feature>
<feature type="mutagenesis site" description="Abolishes sensitivity of channel activity to potentiation or inhibition by Zn(2+); when associated with K-222." evidence="8">
    <original>H</original>
    <variation>F</variation>
    <location>
        <position position="137"/>
    </location>
</feature>
<feature type="mutagenesis site" description="Strongly decreases sensitivity to inhibition by Zn(2+)." evidence="8">
    <original>H</original>
    <variation>N</variation>
    <location>
        <position position="137"/>
    </location>
</feature>
<feature type="mutagenesis site" description="Abolishes potentiation of channel activity by Zn(2+)." evidence="8">
    <original>E</original>
    <variation>A</variation>
    <location>
        <position position="220"/>
    </location>
</feature>
<feature type="mutagenesis site" description="Abolishes potentiation of channel activity by Zn(2+)." evidence="8">
    <original>D</original>
    <variation>A</variation>
    <location>
        <position position="222"/>
    </location>
</feature>
<feature type="mutagenesis site" description="Abolishes sensitivity of channel activity to potentiation or inhibition by Zn(2+); when associated with F-137." evidence="8">
    <original>D</original>
    <variation>K</variation>
    <location>
        <position position="222"/>
    </location>
</feature>
<feature type="mutagenesis site" description="Strongly decreases potentiation of channel activity by Zn(2+)." evidence="8">
    <original>H</original>
    <variation>A</variation>
    <location>
        <position position="243"/>
    </location>
</feature>
<feature type="mutagenesis site" description="Increased single-channel conductance. No effect on glycine sensitivity, but decreased rate of activation." evidence="16">
    <original>G</original>
    <variation>A</variation>
    <location>
        <position position="282"/>
    </location>
</feature>
<feature type="mutagenesis site" description="Decreases channel conductance; the mutant channel requires much higher glycine concentrations for activation." evidence="16">
    <original>K</original>
    <variation>C</variation>
    <location>
        <position position="304"/>
    </location>
</feature>
<feature type="sequence conflict" description="In Ref. 1; CAA36258." evidence="35" ref="1">
    <original>WET</original>
    <variation>SGA</variation>
    <location>
        <begin position="12"/>
        <end position="14"/>
    </location>
</feature>
<feature type="sequence conflict" description="In Ref. 1; CAA36258." evidence="35" ref="1">
    <original>P</original>
    <variation>T</variation>
    <location>
        <position position="33"/>
    </location>
</feature>
<feature type="turn" evidence="43">
    <location>
        <begin position="246"/>
        <end position="248"/>
    </location>
</feature>
<feature type="helix" evidence="44">
    <location>
        <begin position="249"/>
        <end position="254"/>
    </location>
</feature>
<feature type="helix" evidence="44">
    <location>
        <begin position="256"/>
        <end position="267"/>
    </location>
</feature>
<feature type="turn" evidence="43">
    <location>
        <begin position="274"/>
        <end position="276"/>
    </location>
</feature>
<feature type="helix" evidence="44">
    <location>
        <begin position="278"/>
        <end position="280"/>
    </location>
</feature>
<feature type="helix" evidence="44">
    <location>
        <begin position="281"/>
        <end position="284"/>
    </location>
</feature>
<feature type="helix" evidence="44">
    <location>
        <begin position="286"/>
        <end position="289"/>
    </location>
</feature>
<feature type="helix" evidence="44">
    <location>
        <begin position="291"/>
        <end position="297"/>
    </location>
</feature>
<feature type="helix" evidence="44">
    <location>
        <begin position="299"/>
        <end position="301"/>
    </location>
</feature>
<feature type="turn" evidence="44">
    <location>
        <begin position="310"/>
        <end position="312"/>
    </location>
</feature>
<feature type="helix" evidence="44">
    <location>
        <begin position="316"/>
        <end position="323"/>
    </location>
</feature>
<feature type="helix" evidence="44">
    <location>
        <begin position="325"/>
        <end position="335"/>
    </location>
</feature>
<feature type="helix" evidence="43">
    <location>
        <begin position="416"/>
        <end position="419"/>
    </location>
</feature>
<feature type="helix" evidence="44">
    <location>
        <begin position="420"/>
        <end position="423"/>
    </location>
</feature>
<feature type="turn" evidence="44">
    <location>
        <begin position="424"/>
        <end position="426"/>
    </location>
</feature>
<feature type="helix" evidence="44">
    <location>
        <begin position="427"/>
        <end position="446"/>
    </location>
</feature>
<feature type="turn" evidence="43">
    <location>
        <begin position="449"/>
        <end position="453"/>
    </location>
</feature>
<protein>
    <recommendedName>
        <fullName>Glycine receptor subunit alpha-1</fullName>
    </recommendedName>
    <alternativeName>
        <fullName>Glycine receptor 48 kDa subunit</fullName>
    </alternativeName>
    <alternativeName>
        <fullName>Glycine receptor strychnine-binding subunit</fullName>
    </alternativeName>
</protein>
<accession>P23415</accession>
<accession>B2R6T3</accession>
<accession>Q14C77</accession>
<accession>Q6DJV9</accession>
<comment type="function">
    <text evidence="3 7 8 10 11 12 13 15 16 17 22 23 28 38">Subunit of heteromeric glycine-gated chloride channels (PubMed:14551753, PubMed:23994010, PubMed:25730860, PubMed:37821459). Plays an important role in the down-regulation of neuronal excitability (PubMed:8298642, PubMed:9009272). Contributes to the generation of inhibitory postsynaptic currents (PubMed:25445488). Channel activity is potentiated by ethanol (PubMed:25973519). Potentiation of channel activity by intoxicating levels of ethanol contribute to the sedative effects of ethanol (By similarity).</text>
</comment>
<comment type="catalytic activity">
    <reaction evidence="13 16 19">
        <text>chloride(in) = chloride(out)</text>
        <dbReference type="Rhea" id="RHEA:29823"/>
        <dbReference type="ChEBI" id="CHEBI:17996"/>
    </reaction>
</comment>
<comment type="activity regulation">
    <text evidence="1 7 8 10 11 13 15 16 19 28">Channel opening is triggered by extracellular glycine (PubMed:16144831, PubMed:2155780, PubMed:22715885, PubMed:37821459). Channel characteristics depend on the subunit composition; heteropentameric channels are activated by lower glycine levels and display faster desensitization (PubMed:14551753). Channel opening is also triggered by taurine and beta-alanine (PubMed:16144831, PubMed:9009272). Channel activity is potentiated by nanomolar concentrations of Zn(2+); half-maximal activation is observed with 37 nM Zn(2+) (PubMed:16144831). Inhibited by higher Zn(2+) levels; haf-maximal inhibition occurs at 20 uM Zn(2+) (PubMed:16144831). Inhibited by strychnine (PubMed:16144831, PubMed:2155780, PubMed:25445488). Strychnine binding locks the channel in a closed conformation and prevents channel opening in response to extracellular glycine (By similarity). Inhibited by lindane (PubMed:25445488). Inhibited by picrotoxin (PubMed:22715885, PubMed:23994010, PubMed:25730860).</text>
</comment>
<comment type="biophysicochemical properties">
    <kinetics>
        <text evidence="22 28">A concentration of about 0.02 mM glycine results in half-maximal channel conductance for homopentamers. A concentration of 0.018 mM glycine results in half-maximal channel conductance for homopentamers upon heterologous expression in cultured human embryonic kidney cells (PubMed:9009272). A concentration of 0.027 mM glycine results in half-maximal channel conductance for homopentamers upon heterologous expression in cultured human embryonic kidney cells (PubMed:7920629).</text>
    </kinetics>
</comment>
<comment type="subunit">
    <text evidence="7 11 12 13 15 16 18 19">Interacts with GLRB to form heteropentameric channels; this is probably the predominant form in vivo (PubMed:22715885, PubMed:22973015, PubMed:25445488, PubMed:35526563, PubMed:37821459). Heteropentamer composed of four GLRA1 subunits and one GLRB subunit (PubMed:37821459). Heteropentamer composed of two GLRA1 and three GLRB (PubMed:22715885). Heteropentamer composed of three GLRA1 and two GLRB (PubMed:22973015). Homopentamer (in vitro) (PubMed:22715885, PubMed:22973015, PubMed:23994010, PubMed:25730860). Both homopentamers and heteropentamers form functional ion channels, but their characteristics are subtly different (PubMed:14551753, PubMed:22715885, PubMed:22973015, PubMed:23994010, PubMed:25445488, PubMed:25730860).</text>
</comment>
<comment type="interaction">
    <interactant intactId="EBI-12020340">
        <id>P23415</id>
    </interactant>
    <interactant intactId="EBI-11733190">
        <id>P48167</id>
        <label>GLRB</label>
    </interactant>
    <organismsDiffer>false</organismsDiffer>
    <experiments>2</experiments>
</comment>
<comment type="interaction">
    <interactant intactId="EBI-12020340">
        <id>P23415</id>
    </interactant>
    <interactant intactId="EBI-716006">
        <id>Q9Y5V3</id>
        <label>MAGED1</label>
    </interactant>
    <organismsDiffer>false</organismsDiffer>
    <experiments>3</experiments>
</comment>
<comment type="interaction">
    <interactant intactId="EBI-12020340">
        <id>P23415</id>
    </interactant>
    <interactant intactId="EBI-741237">
        <id>O60504</id>
        <label>SORBS3</label>
    </interactant>
    <organismsDiffer>false</organismsDiffer>
    <experiments>3</experiments>
</comment>
<comment type="interaction">
    <interactant intactId="EBI-16072009">
        <id>P23415-1</id>
    </interactant>
    <interactant intactId="EBI-16072009">
        <id>P23415-1</id>
        <label>GLRA1</label>
    </interactant>
    <organismsDiffer>false</organismsDiffer>
    <experiments>2</experiments>
</comment>
<comment type="subcellular location">
    <subcellularLocation>
        <location evidence="3">Postsynaptic cell membrane</location>
        <topology evidence="3">Multi-pass membrane protein</topology>
    </subcellularLocation>
    <subcellularLocation>
        <location evidence="3">Synapse</location>
    </subcellularLocation>
    <subcellularLocation>
        <location evidence="3">Perikaryon</location>
    </subcellularLocation>
    <subcellularLocation>
        <location evidence="3">Cell projection</location>
        <location evidence="3">Dendrite</location>
    </subcellularLocation>
    <subcellularLocation>
        <location evidence="7 8 10 11 12 14 15 16 17 22 23 28">Cell membrane</location>
        <topology evidence="13 16 37">Multi-pass membrane protein</topology>
    </subcellularLocation>
</comment>
<comment type="alternative products">
    <event type="alternative splicing"/>
    <isoform>
        <id>P23415-1</id>
        <name>a</name>
        <sequence type="displayed"/>
    </isoform>
    <isoform>
        <id>P23415-2</id>
        <name>b</name>
        <sequence type="described" ref="VSP_021142"/>
    </isoform>
</comment>
<comment type="domain">
    <text evidence="1 13">The channel pore is formed by pentameric assembly of the second transmembrane domain from all five subunits. In the absence of the extracellular domain, the channel is in a constitutively open conformation (PubMed:23994010). Channel opening is effected by an outward rotation of the transmembrane domains that increases the diameter of the pore (By similarity).</text>
</comment>
<comment type="disease" evidence="6 14 16 20 21 23 24 25 26 27 28 29 30 31">
    <disease id="DI-01087">
        <name>Hyperekplexia 1</name>
        <acronym>HKPX1</acronym>
        <description>A neurologic disorder characterized by muscular rigidity of central nervous system origin, particularly in the neonatal period, and by an exaggerated startle response to unexpected acoustic or tactile stimuli.</description>
        <dbReference type="MIM" id="149400"/>
    </disease>
    <text>The disease is caused by variants affecting the gene represented in this entry.</text>
</comment>
<comment type="miscellaneous">
    <text evidence="10">The alpha subunit binds strychnine.</text>
</comment>
<comment type="similarity">
    <text evidence="35">Belongs to the ligand-gated ion channel (TC 1.A.9) family. Glycine receptor (TC 1.A.9.3) subfamily. GLRA1 sub-subfamily.</text>
</comment>
<organism>
    <name type="scientific">Homo sapiens</name>
    <name type="common">Human</name>
    <dbReference type="NCBI Taxonomy" id="9606"/>
    <lineage>
        <taxon>Eukaryota</taxon>
        <taxon>Metazoa</taxon>
        <taxon>Chordata</taxon>
        <taxon>Craniata</taxon>
        <taxon>Vertebrata</taxon>
        <taxon>Euteleostomi</taxon>
        <taxon>Mammalia</taxon>
        <taxon>Eutheria</taxon>
        <taxon>Euarchontoglires</taxon>
        <taxon>Primates</taxon>
        <taxon>Haplorrhini</taxon>
        <taxon>Catarrhini</taxon>
        <taxon>Hominidae</taxon>
        <taxon>Homo</taxon>
    </lineage>
</organism>
<reference key="1">
    <citation type="journal article" date="1990" name="EMBO J.">
        <title>Alpha subunit variants of the human glycine receptor: primary structures, functional expression and chromosomal localization of the corresponding genes.</title>
        <authorList>
            <person name="Grenningloh G."/>
            <person name="Schmieden V."/>
            <person name="Schofield P.R."/>
            <person name="Seeburg P.H."/>
            <person name="Siddique T."/>
            <person name="Mohandas T.K."/>
            <person name="Becker C.-M."/>
            <person name="Betz H."/>
        </authorList>
    </citation>
    <scope>NUCLEOTIDE SEQUENCE [MRNA] (ISOFORM B)</scope>
    <scope>FUNCTION</scope>
    <scope>SUBCELLULAR LOCATION</scope>
    <scope>ACTIVITY REGULATION</scope>
</reference>
<reference key="2">
    <citation type="journal article" date="2004" name="Nat. Genet.">
        <title>Complete sequencing and characterization of 21,243 full-length human cDNAs.</title>
        <authorList>
            <person name="Ota T."/>
            <person name="Suzuki Y."/>
            <person name="Nishikawa T."/>
            <person name="Otsuki T."/>
            <person name="Sugiyama T."/>
            <person name="Irie R."/>
            <person name="Wakamatsu A."/>
            <person name="Hayashi K."/>
            <person name="Sato H."/>
            <person name="Nagai K."/>
            <person name="Kimura K."/>
            <person name="Makita H."/>
            <person name="Sekine M."/>
            <person name="Obayashi M."/>
            <person name="Nishi T."/>
            <person name="Shibahara T."/>
            <person name="Tanaka T."/>
            <person name="Ishii S."/>
            <person name="Yamamoto J."/>
            <person name="Saito K."/>
            <person name="Kawai Y."/>
            <person name="Isono Y."/>
            <person name="Nakamura Y."/>
            <person name="Nagahari K."/>
            <person name="Murakami K."/>
            <person name="Yasuda T."/>
            <person name="Iwayanagi T."/>
            <person name="Wagatsuma M."/>
            <person name="Shiratori A."/>
            <person name="Sudo H."/>
            <person name="Hosoiri T."/>
            <person name="Kaku Y."/>
            <person name="Kodaira H."/>
            <person name="Kondo H."/>
            <person name="Sugawara M."/>
            <person name="Takahashi M."/>
            <person name="Kanda K."/>
            <person name="Yokoi T."/>
            <person name="Furuya T."/>
            <person name="Kikkawa E."/>
            <person name="Omura Y."/>
            <person name="Abe K."/>
            <person name="Kamihara K."/>
            <person name="Katsuta N."/>
            <person name="Sato K."/>
            <person name="Tanikawa M."/>
            <person name="Yamazaki M."/>
            <person name="Ninomiya K."/>
            <person name="Ishibashi T."/>
            <person name="Yamashita H."/>
            <person name="Murakawa K."/>
            <person name="Fujimori K."/>
            <person name="Tanai H."/>
            <person name="Kimata M."/>
            <person name="Watanabe M."/>
            <person name="Hiraoka S."/>
            <person name="Chiba Y."/>
            <person name="Ishida S."/>
            <person name="Ono Y."/>
            <person name="Takiguchi S."/>
            <person name="Watanabe S."/>
            <person name="Yosida M."/>
            <person name="Hotuta T."/>
            <person name="Kusano J."/>
            <person name="Kanehori K."/>
            <person name="Takahashi-Fujii A."/>
            <person name="Hara H."/>
            <person name="Tanase T.-O."/>
            <person name="Nomura Y."/>
            <person name="Togiya S."/>
            <person name="Komai F."/>
            <person name="Hara R."/>
            <person name="Takeuchi K."/>
            <person name="Arita M."/>
            <person name="Imose N."/>
            <person name="Musashino K."/>
            <person name="Yuuki H."/>
            <person name="Oshima A."/>
            <person name="Sasaki N."/>
            <person name="Aotsuka S."/>
            <person name="Yoshikawa Y."/>
            <person name="Matsunawa H."/>
            <person name="Ichihara T."/>
            <person name="Shiohata N."/>
            <person name="Sano S."/>
            <person name="Moriya S."/>
            <person name="Momiyama H."/>
            <person name="Satoh N."/>
            <person name="Takami S."/>
            <person name="Terashima Y."/>
            <person name="Suzuki O."/>
            <person name="Nakagawa S."/>
            <person name="Senoh A."/>
            <person name="Mizoguchi H."/>
            <person name="Goto Y."/>
            <person name="Shimizu F."/>
            <person name="Wakebe H."/>
            <person name="Hishigaki H."/>
            <person name="Watanabe T."/>
            <person name="Sugiyama A."/>
            <person name="Takemoto M."/>
            <person name="Kawakami B."/>
            <person name="Yamazaki M."/>
            <person name="Watanabe K."/>
            <person name="Kumagai A."/>
            <person name="Itakura S."/>
            <person name="Fukuzumi Y."/>
            <person name="Fujimori Y."/>
            <person name="Komiyama M."/>
            <person name="Tashiro H."/>
            <person name="Tanigami A."/>
            <person name="Fujiwara T."/>
            <person name="Ono T."/>
            <person name="Yamada K."/>
            <person name="Fujii Y."/>
            <person name="Ozaki K."/>
            <person name="Hirao M."/>
            <person name="Ohmori Y."/>
            <person name="Kawabata A."/>
            <person name="Hikiji T."/>
            <person name="Kobatake N."/>
            <person name="Inagaki H."/>
            <person name="Ikema Y."/>
            <person name="Okamoto S."/>
            <person name="Okitani R."/>
            <person name="Kawakami T."/>
            <person name="Noguchi S."/>
            <person name="Itoh T."/>
            <person name="Shigeta K."/>
            <person name="Senba T."/>
            <person name="Matsumura K."/>
            <person name="Nakajima Y."/>
            <person name="Mizuno T."/>
            <person name="Morinaga M."/>
            <person name="Sasaki M."/>
            <person name="Togashi T."/>
            <person name="Oyama M."/>
            <person name="Hata H."/>
            <person name="Watanabe M."/>
            <person name="Komatsu T."/>
            <person name="Mizushima-Sugano J."/>
            <person name="Satoh T."/>
            <person name="Shirai Y."/>
            <person name="Takahashi Y."/>
            <person name="Nakagawa K."/>
            <person name="Okumura K."/>
            <person name="Nagase T."/>
            <person name="Nomura N."/>
            <person name="Kikuchi H."/>
            <person name="Masuho Y."/>
            <person name="Yamashita R."/>
            <person name="Nakai K."/>
            <person name="Yada T."/>
            <person name="Nakamura Y."/>
            <person name="Ohara O."/>
            <person name="Isogai T."/>
            <person name="Sugano S."/>
        </authorList>
    </citation>
    <scope>NUCLEOTIDE SEQUENCE [LARGE SCALE MRNA] (ISOFORM B)</scope>
</reference>
<reference key="3">
    <citation type="submission" date="2005-09" db="EMBL/GenBank/DDBJ databases">
        <authorList>
            <person name="Mural R.J."/>
            <person name="Istrail S."/>
            <person name="Sutton G.G."/>
            <person name="Florea L."/>
            <person name="Halpern A.L."/>
            <person name="Mobarry C.M."/>
            <person name="Lippert R."/>
            <person name="Walenz B."/>
            <person name="Shatkay H."/>
            <person name="Dew I."/>
            <person name="Miller J.R."/>
            <person name="Flanigan M.J."/>
            <person name="Edwards N.J."/>
            <person name="Bolanos R."/>
            <person name="Fasulo D."/>
            <person name="Halldorsson B.V."/>
            <person name="Hannenhalli S."/>
            <person name="Turner R."/>
            <person name="Yooseph S."/>
            <person name="Lu F."/>
            <person name="Nusskern D.R."/>
            <person name="Shue B.C."/>
            <person name="Zheng X.H."/>
            <person name="Zhong F."/>
            <person name="Delcher A.L."/>
            <person name="Huson D.H."/>
            <person name="Kravitz S.A."/>
            <person name="Mouchard L."/>
            <person name="Reinert K."/>
            <person name="Remington K.A."/>
            <person name="Clark A.G."/>
            <person name="Waterman M.S."/>
            <person name="Eichler E.E."/>
            <person name="Adams M.D."/>
            <person name="Hunkapiller M.W."/>
            <person name="Myers E.W."/>
            <person name="Venter J.C."/>
        </authorList>
    </citation>
    <scope>NUCLEOTIDE SEQUENCE [LARGE SCALE GENOMIC DNA]</scope>
</reference>
<reference key="4">
    <citation type="journal article" date="2004" name="Genome Res.">
        <title>The status, quality, and expansion of the NIH full-length cDNA project: the Mammalian Gene Collection (MGC).</title>
        <authorList>
            <consortium name="The MGC Project Team"/>
        </authorList>
    </citation>
    <scope>NUCLEOTIDE SEQUENCE [LARGE SCALE MRNA] (ISOFORMS A AND B)</scope>
</reference>
<reference key="5">
    <citation type="journal article" date="1994" name="Nat. Genet.">
        <title>A missense mutation in the gene encoding the alpha 1 subunit of the inhibitory glycine receptor in the spasmodic mouse.</title>
        <authorList>
            <person name="Ryan S.G."/>
            <person name="Buckwalter M.S."/>
            <person name="Lynch J.W."/>
            <person name="Handford C.A."/>
            <person name="Segura L."/>
            <person name="Shiang R."/>
            <person name="Wasmuth J.J."/>
            <person name="Camper S.A."/>
            <person name="Schofield P."/>
            <person name="O'Connell P."/>
        </authorList>
    </citation>
    <scope>FUNCTION</scope>
    <scope>BIOPHYSICOCHEMICAL PROPERTIES</scope>
    <scope>SUBCELLULAR LOCATION</scope>
    <scope>MUTAGENESIS OF ALA-80</scope>
</reference>
<reference key="6">
    <citation type="journal article" date="2003" name="Eur. Biophys. J.">
        <title>Kinetic analysis of recombinant mammalian alpha(1) and alpha(1)beta glycine receptor channels.</title>
        <authorList>
            <person name="Mohammadi B."/>
            <person name="Krampfl K."/>
            <person name="Cetinkaya C."/>
            <person name="Moschref H."/>
            <person name="Grosskreutz J."/>
            <person name="Dengler R."/>
            <person name="Bufler J."/>
        </authorList>
    </citation>
    <scope>FUNCTION</scope>
    <scope>SUBCELLULAR LOCATION</scope>
    <scope>SUBUNIT</scope>
    <scope>INTERACTION WITH GLRB</scope>
    <scope>ACTIVITY REGULATION</scope>
</reference>
<reference key="7">
    <citation type="journal article" date="2005" name="J. Biol. Chem.">
        <title>Molecular basis for zinc potentiation at strychnine-sensitive glycine receptors.</title>
        <authorList>
            <person name="Miller P.S."/>
            <person name="Da Silva H.M."/>
            <person name="Smart T.G."/>
        </authorList>
    </citation>
    <scope>FUNCTION</scope>
    <scope>ACTIVITY REGULATION</scope>
    <scope>SUBCELLULAR LOCATION</scope>
    <scope>MUTAGENESIS OF HIS-137; GLU-220; ASP-222 AND HIS-243</scope>
</reference>
<reference key="8">
    <citation type="journal article" date="2009" name="J. Biol. Chem.">
        <title>Mapping of disulfide bonds within the amino-terminal extracellular domain of the inhibitory glycine receptor.</title>
        <authorList>
            <person name="Vogel N."/>
            <person name="Kluck C.J."/>
            <person name="Melzer N."/>
            <person name="Schwarzinger S."/>
            <person name="Breitinger U."/>
            <person name="Seeber S."/>
            <person name="Becker C.M."/>
        </authorList>
    </citation>
    <scope>DISULFIDE BONDS</scope>
</reference>
<reference key="9">
    <citation type="journal article" date="2012" name="Biochemistry">
        <title>Stoichiometry and subunit arrangement of alpha1beta glycine receptors as determined by atomic force microscopy.</title>
        <authorList>
            <person name="Yang Z."/>
            <person name="Taran E."/>
            <person name="Webb T.I."/>
            <person name="Lynch J.W."/>
        </authorList>
    </citation>
    <scope>FUNCTION</scope>
    <scope>ACTIVITY REGULATION</scope>
    <scope>SUBCELLULAR LOCATION</scope>
    <scope>INTERACTION WITH GLRB</scope>
    <scope>SUBUNIT STOICHIOMETRY</scope>
</reference>
<reference key="10">
    <citation type="journal article" date="2012" name="J. Neurosci.">
        <title>Stoichiometry of the human glycine receptor revealed by direct subunit counting.</title>
        <authorList>
            <person name="Durisic N."/>
            <person name="Godin A.G."/>
            <person name="Wever C.M."/>
            <person name="Heyes C.D."/>
            <person name="Lakadamyali M."/>
            <person name="Dent J.A."/>
        </authorList>
    </citation>
    <scope>FUNCTION</scope>
    <scope>SUBCELLULAR LOCATION</scope>
    <scope>INTERACTION WITH GLRB</scope>
    <scope>SUBUNIT STOICHIOMETRY</scope>
</reference>
<reference key="11">
    <citation type="journal article" date="2015" name="Alcohol. Clin. Exp. Res.">
        <title>Ethanol modulation is quantitatively determined by the transmembrane domain of human alpha1 glycine receptors.</title>
        <authorList>
            <person name="Horani S."/>
            <person name="Stater E.P."/>
            <person name="Corringer P.J."/>
            <person name="Trudell J.R."/>
            <person name="Harris R.A."/>
            <person name="Howard R.J."/>
        </authorList>
    </citation>
    <scope>FUNCTION</scope>
    <scope>SUBCELLULAR LOCATION</scope>
</reference>
<reference key="12">
    <citation type="journal article" date="2015" name="Neuropharmacology">
        <title>Functional reconstitution of glycinergic synapses incorporating defined glycine receptor subunit combinations.</title>
        <authorList>
            <person name="Zhang Y."/>
            <person name="Dixon C.L."/>
            <person name="Keramidas A."/>
            <person name="Lynch J.W."/>
        </authorList>
    </citation>
    <scope>FUNCTION</scope>
    <scope>ACTIVITY REGULATION</scope>
    <scope>SUBCELLULAR LOCATION</scope>
    <scope>SUBUNIT</scope>
</reference>
<reference key="13">
    <citation type="journal article" date="2022" name="J. Biol. Chem.">
        <title>Clinical, genetic, and functional characterization of the glycine receptor beta-subunit A455P variant in a family affected by hyperekplexia syndrome.</title>
        <authorList>
            <person name="Aboheimed G.I."/>
            <person name="AlRasheed M.M."/>
            <person name="Almudimeegh S."/>
            <person name="Pena-Guerra K.A."/>
            <person name="Cardona-Londono K.J."/>
            <person name="Salih M.A."/>
            <person name="Seidahmed M.Z."/>
            <person name="Al-Mohanna F."/>
            <person name="Colak D."/>
            <person name="Harvey R.J."/>
            <person name="Harvey K."/>
            <person name="Arold S.T."/>
            <person name="Kaya N."/>
            <person name="Ruiz A.J."/>
        </authorList>
    </citation>
    <scope>INTERACTION WITH GLRB</scope>
</reference>
<reference key="14">
    <citation type="journal article" date="2003" name="Biochemistry">
        <title>NMR structure and backbone dynamics of the extended second transmembrane domain of the human neuronal glycine receptor alpha1 subunit.</title>
        <authorList>
            <person name="Yushmanov V.E."/>
            <person name="Mandal P.K."/>
            <person name="Liu Z."/>
            <person name="Tang P."/>
            <person name="Xu Y."/>
        </authorList>
    </citation>
    <scope>STRUCTURE BY NMR OF 277-304</scope>
</reference>
<reference key="15">
    <citation type="journal article" date="2005" name="Biochemistry">
        <title>Structure and dynamics of the second and third transmembrane domains of human glycine receptor.</title>
        <authorList>
            <person name="Ma D."/>
            <person name="Liu Z."/>
            <person name="Li L."/>
            <person name="Tang P."/>
            <person name="Xu Y."/>
        </authorList>
    </citation>
    <scope>STRUCTURE BY NMR OF 278-337</scope>
</reference>
<reference key="16">
    <citation type="journal article" date="2013" name="Structure">
        <title>Open-channel structures of the human glycine receptor alpha1 full-length transmembrane domain.</title>
        <authorList>
            <person name="Mowrey D.D."/>
            <person name="Cui T."/>
            <person name="Jia Y."/>
            <person name="Ma D."/>
            <person name="Makhov A.M."/>
            <person name="Zhang P."/>
            <person name="Tang P."/>
            <person name="Xu Y."/>
        </authorList>
    </citation>
    <scope>STRUCTURE BY NMR OF 244-453</scope>
    <scope>ELECTRON MICROSCOPY</scope>
    <scope>FUNCTION</scope>
    <scope>TRANSPORTER ACTIVITY</scope>
    <scope>ACTIVITY REGULATION</scope>
    <scope>SUBUNIT</scope>
    <scope>SUBCELLULAR LOCATION</scope>
    <scope>TOPOLOGY</scope>
    <scope>DOMAIN</scope>
</reference>
<reference key="17">
    <citation type="journal article" date="2015" name="Proc. Natl. Acad. Sci. U.S.A.">
        <title>Allosteric and hyperekplexic mutant phenotypes investigated on an alpha1 glycine receptor transmembrane structure.</title>
        <authorList>
            <person name="Moraga-Cid G."/>
            <person name="Sauguet L."/>
            <person name="Huon C."/>
            <person name="Malherbe L."/>
            <person name="Girard-Blanc C."/>
            <person name="Petres S."/>
            <person name="Murail S."/>
            <person name="Taly A."/>
            <person name="Baaden M."/>
            <person name="Delarue M."/>
            <person name="Corringer P.J."/>
        </authorList>
    </citation>
    <scope>X-RAY CRYSTALLOGRAPHY (3.50 ANGSTROMS) OF 246-338 AND 418-446</scope>
    <scope>FUNCTION</scope>
    <scope>TRANSPORTER ACTIVITY</scope>
    <scope>ACTIVITY REGULATION</scope>
    <scope>SUBUNIT</scope>
    <scope>SUBCELLULAR LOCATION</scope>
    <scope>TOPOLOGY</scope>
    <scope>CHARACTERIZATION OF VARIANTS HKPX1 GLU-254; THR-278; GLN-299 AND MET-308</scope>
    <scope>MUTAGENESIS OF GLY-282 AND LYS-304</scope>
</reference>
<reference evidence="39 40 41 42" key="18">
    <citation type="journal article" date="2023" name="Nat. Commun.">
        <title>Asymmetric gating of a human hetero-pentameric glycine receptor.</title>
        <authorList>
            <person name="Liu X."/>
            <person name="Wang W."/>
        </authorList>
    </citation>
    <scope>STRUCTURE BY ELECTRON MICROSCOPY (3.55 ANGSTROMS) OF 29-457 IN COMPLEX WITH GLRB AND GLYCINE</scope>
    <scope>STOICHIOMETRY</scope>
    <scope>FUNCTION</scope>
    <scope>TRANSPORTER ACTIVITY</scope>
    <scope>SUBUNIT</scope>
    <scope>ACTIVITY REGULATION</scope>
</reference>
<reference key="19">
    <citation type="journal article" date="1993" name="Nat. Genet.">
        <title>Mutations in the alpha 1 subunit of the inhibitory glycine receptor cause the dominant neurologic disorder, hyperekplexia.</title>
        <authorList>
            <person name="Shiang R."/>
            <person name="Ryan S.G."/>
            <person name="Zhu Y.-Z."/>
            <person name="Hahn A.F."/>
            <person name="O'Connell P."/>
            <person name="Wasmuth J.J."/>
        </authorList>
    </citation>
    <scope>VARIANTS HKPX1 LEU-299 AND GLN-299</scope>
</reference>
<reference key="20">
    <citation type="journal article" date="1994" name="Am. J. Hum. Genet.">
        <title>Mutational and haplotype analysis of the aplha1 subunit of the glycine receptor in hyperekplexia patients.</title>
        <authorList>
            <person name="Shiang R."/>
            <person name="Ryan S.G."/>
            <person name="Zhu Y.-Z."/>
            <person name="O'Connell P."/>
            <person name="Wasmuth J.J."/>
        </authorList>
    </citation>
    <scope>VARIANT HKPX1 CYS-307</scope>
</reference>
<reference key="21">
    <citation type="journal article" date="1994" name="EMBO J.">
        <title>Decreased agonist affinity and chloride conductance of mutant glycine receptors associated with human hereditary hyperekplexia.</title>
        <authorList>
            <person name="Langosch D."/>
            <person name="Laube B."/>
            <person name="Runstroem N."/>
            <person name="Schmieden V."/>
            <person name="Bormann J."/>
            <person name="Betz H."/>
        </authorList>
    </citation>
    <scope>CHARACTERIZATION OF VARIANTS HKPX1 LEU-299 AND GLN-299</scope>
    <scope>FUNCTION</scope>
    <scope>SUBCELLULAR LOCATION</scope>
</reference>
<reference key="22">
    <citation type="journal article" date="1994" name="Hum. Mol. Genet.">
        <title>An additional family with Startle disease and a G1192A mutation at the alpha 1 subunit of the inhibitory glycine receptor gene.</title>
        <authorList>
            <person name="Schorderet D.F."/>
            <person name="Pescia G."/>
            <person name="Bernasconi A."/>
            <person name="Regli F."/>
        </authorList>
    </citation>
    <scope>VARIANT HKPX1 LEU-299</scope>
</reference>
<reference key="23">
    <citation type="journal article" date="1994" name="Hum. Mol. Genet.">
        <title>Evidence for recessive as well as dominant forms of startle disease (hyperekplexia) caused by mutations in the alpha 1 subunit of the inhibitory glycine receptor.</title>
        <authorList>
            <person name="Rees M.I."/>
            <person name="Andrew M."/>
            <person name="Jawad S."/>
            <person name="Owen M.J."/>
        </authorList>
    </citation>
    <scope>VARIANT HKPX1 ASN-272</scope>
</reference>
<reference key="24">
    <citation type="journal article" date="1995" name="Ann. Neurol.">
        <title>Mutational analysis of familial and sporadic hyperekplexia.</title>
        <authorList>
            <person name="Shiang R."/>
            <person name="Ryan S.G."/>
            <person name="Zhu Y.-Z."/>
            <person name="Fielder T.J."/>
            <person name="Allen R.J."/>
            <person name="Fryer A."/>
            <person name="Yamashita S."/>
            <person name="O'Connell P."/>
            <person name="Wasmuth J.J."/>
        </authorList>
    </citation>
    <scope>VARIANT HKPX1 CYS-307</scope>
</reference>
<reference key="25">
    <citation type="journal article" date="1996" name="Am. J. Hum. Genet.">
        <title>A novel mutation (Gln266--&gt;His) in the alpha 1 subunit of the inhibitory glycine-receptor gene (GLRA1) in hereditary hyperekplexia.</title>
        <authorList>
            <person name="Milani N."/>
            <person name="Dalpra L."/>
            <person name="del Prete A."/>
            <person name="Zanini R."/>
            <person name="Larizza L."/>
        </authorList>
    </citation>
    <scope>VARIANT HKPX1 HIS-294</scope>
</reference>
<reference key="26">
    <citation type="journal article" date="1996" name="J. Med. Genet.">
        <title>Analysis of GLRA1 in hereditary and sporadic hyperekplexia: a novel mutation in a family cosegregating for hyperekplexia and spastic paraparesis.</title>
        <authorList>
            <person name="Elmslie F.V."/>
            <person name="Hutchings S.M."/>
            <person name="Spencer V."/>
            <person name="Curtis A."/>
            <person name="Covanis T."/>
            <person name="Gardiner R.M."/>
            <person name="Rees M."/>
        </authorList>
    </citation>
    <scope>VARIANT HKPX1 GLU-304</scope>
</reference>
<reference key="27">
    <citation type="journal article" date="1997" name="EMBO J.">
        <title>Identification of intracellular and extracellular domains mediating signal transduction in the inhibitory glycine receptor chloride channel.</title>
        <authorList>
            <person name="Lynch J.W."/>
            <person name="Rajendra S."/>
            <person name="Pierce K.D."/>
            <person name="Handford C.A."/>
            <person name="Barry P.H."/>
            <person name="Schofield P.R."/>
        </authorList>
    </citation>
    <scope>CHARACTERIZATION OF VARIANTS HKPX1 ASN-272; LEU-299; GLN-299; GLU-304 AND CYS-307</scope>
    <scope>FUNCTION</scope>
    <scope>ACTIVITY REGULATION</scope>
    <scope>SUBCELLULAR LOCATION</scope>
    <scope>BIOPHYSICOCHEMICAL PROPERTIES</scope>
</reference>
<reference key="28">
    <citation type="journal article" date="1997" name="Hum. Mutat.">
        <title>Startle disease in an Italian family by mutation (K276E): the alpha-subunit of the inhibiting glycine receptor.</title>
        <authorList>
            <person name="Seri M."/>
            <person name="Bolino A."/>
            <person name="Galietta L.J.V."/>
            <person name="Lerone M."/>
            <person name="Silengo M."/>
            <person name="Romeo G."/>
        </authorList>
    </citation>
    <scope>VARIANT HKPX1 GLU-304</scope>
</reference>
<reference key="29">
    <citation type="journal article" date="1999" name="Ann. Neurol.">
        <title>Hyperekplexia phenotype due to compound heterozygosity for GLRA1 gene mutations.</title>
        <authorList>
            <person name="Vergouwe M.N."/>
            <person name="Tijssen M.A."/>
            <person name="Peters A.C."/>
            <person name="Wielaard R."/>
            <person name="Frants R.R."/>
        </authorList>
    </citation>
    <scope>VARIANTS HKPX1 HIS-280 AND HIS-428</scope>
</reference>
<reference key="30">
    <citation type="journal article" date="1999" name="J. Neurosci.">
        <title>Novel GLRA1 missense mutation (P250T) in dominant hyperekplexia defines an intracellular determinant of glycine receptor channel gating.</title>
        <authorList>
            <person name="Saul B."/>
            <person name="Kuner T."/>
            <person name="Sobetzko D."/>
            <person name="Brune W."/>
            <person name="Hanefeld F."/>
            <person name="Meinck H.-M."/>
            <person name="Becker C.-M."/>
        </authorList>
    </citation>
    <scope>VARIANT HKPX1 THR-278</scope>
</reference>
<reference key="31">
    <citation type="journal article" date="2013" name="J. Biol. Chem.">
        <title>New hyperekplexia mutations provide insight into glycine receptor assembly, trafficking, and activation mechanisms.</title>
        <authorList>
            <person name="Bode A."/>
            <person name="Wood S.E."/>
            <person name="Mullins J.G."/>
            <person name="Keramidas A."/>
            <person name="Cushion T.D."/>
            <person name="Thomas R.H."/>
            <person name="Pickrell W.O."/>
            <person name="Drew C.J."/>
            <person name="Masri A."/>
            <person name="Jones E.A."/>
            <person name="Vassallo G."/>
            <person name="Born A.P."/>
            <person name="Alehan F."/>
            <person name="Aharoni S."/>
            <person name="Bannasch G."/>
            <person name="Bartsch M."/>
            <person name="Kara B."/>
            <person name="Krause A."/>
            <person name="Karam E.G."/>
            <person name="Matta S."/>
            <person name="Jain V."/>
            <person name="Mandel H."/>
            <person name="Freilinger M."/>
            <person name="Graham G.E."/>
            <person name="Hobson E."/>
            <person name="Chatfield S."/>
            <person name="Vincent-Delorme C."/>
            <person name="Rahme J.E."/>
            <person name="Afawi Z."/>
            <person name="Berkovic S.F."/>
            <person name="Howell O.W."/>
            <person name="Vanbellinghen J.F."/>
            <person name="Rees M.I."/>
            <person name="Chung S.K."/>
            <person name="Lynch J.W."/>
        </authorList>
    </citation>
    <scope>VARIANTS HKPX1 TRP-93; CYS-100; TRP-246; GLU-254; SER-258; PRO-319 AND ALA-424</scope>
    <scope>CHARACTERIZATION OF VARIANTS HKPX1 TRP-93; CYS-100; TRP-246; GLU-254; SER-258; HIS-280; MET-308; PRO-319; ALA-424 AND HIS-450</scope>
    <scope>FUNCTION</scope>
    <scope>SUBCELLULAR LOCATION</scope>
</reference>
<keyword id="KW-0002">3D-structure</keyword>
<keyword id="KW-0025">Alternative splicing</keyword>
<keyword id="KW-1003">Cell membrane</keyword>
<keyword id="KW-0966">Cell projection</keyword>
<keyword id="KW-0868">Chloride</keyword>
<keyword id="KW-0869">Chloride channel</keyword>
<keyword id="KW-0225">Disease variant</keyword>
<keyword id="KW-1015">Disulfide bond</keyword>
<keyword id="KW-0325">Glycoprotein</keyword>
<keyword id="KW-0407">Ion channel</keyword>
<keyword id="KW-0406">Ion transport</keyword>
<keyword id="KW-1071">Ligand-gated ion channel</keyword>
<keyword id="KW-0472">Membrane</keyword>
<keyword id="KW-0479">Metal-binding</keyword>
<keyword id="KW-0628">Postsynaptic cell membrane</keyword>
<keyword id="KW-0675">Receptor</keyword>
<keyword id="KW-1185">Reference proteome</keyword>
<keyword id="KW-0732">Signal</keyword>
<keyword id="KW-0770">Synapse</keyword>
<keyword id="KW-0812">Transmembrane</keyword>
<keyword id="KW-1133">Transmembrane helix</keyword>
<keyword id="KW-0813">Transport</keyword>
<keyword id="KW-0862">Zinc</keyword>
<dbReference type="EMBL" id="X52009">
    <property type="protein sequence ID" value="CAA36258.1"/>
    <property type="molecule type" value="mRNA"/>
</dbReference>
<dbReference type="EMBL" id="AK312702">
    <property type="protein sequence ID" value="BAG35580.1"/>
    <property type="molecule type" value="mRNA"/>
</dbReference>
<dbReference type="EMBL" id="CH471062">
    <property type="protein sequence ID" value="EAW61657.1"/>
    <property type="molecule type" value="Genomic_DNA"/>
</dbReference>
<dbReference type="EMBL" id="BC074980">
    <property type="protein sequence ID" value="AAH74980.1"/>
    <property type="molecule type" value="mRNA"/>
</dbReference>
<dbReference type="EMBL" id="BC114947">
    <property type="protein sequence ID" value="AAI14948.1"/>
    <property type="molecule type" value="mRNA"/>
</dbReference>
<dbReference type="CCDS" id="CCDS4320.1">
    <molecule id="P23415-2"/>
</dbReference>
<dbReference type="CCDS" id="CCDS54942.1">
    <molecule id="P23415-1"/>
</dbReference>
<dbReference type="PIR" id="S12382">
    <property type="entry name" value="S12382"/>
</dbReference>
<dbReference type="RefSeq" id="NP_000162.2">
    <molecule id="P23415-2"/>
    <property type="nucleotide sequence ID" value="NM_000171.4"/>
</dbReference>
<dbReference type="RefSeq" id="NP_001139512.1">
    <molecule id="P23415-1"/>
    <property type="nucleotide sequence ID" value="NM_001146040.2"/>
</dbReference>
<dbReference type="PDB" id="1MOT">
    <property type="method" value="NMR"/>
    <property type="chains" value="A=277-304"/>
</dbReference>
<dbReference type="PDB" id="1VRY">
    <property type="method" value="NMR"/>
    <property type="chains" value="A=278-337"/>
</dbReference>
<dbReference type="PDB" id="2M6B">
    <property type="method" value="NMR"/>
    <property type="chains" value="A=244-453"/>
</dbReference>
<dbReference type="PDB" id="2M6I">
    <property type="method" value="NMR"/>
    <property type="chains" value="A/B/C/D/E=244-453"/>
</dbReference>
<dbReference type="PDB" id="4X5T">
    <property type="method" value="X-ray"/>
    <property type="resolution" value="3.50 A"/>
    <property type="chains" value="A/B/C/D/E=246-338, A/B/C/D/E=418-446"/>
</dbReference>
<dbReference type="PDB" id="8DN2">
    <property type="method" value="EM"/>
    <property type="resolution" value="3.90 A"/>
    <property type="chains" value="A/B/C/D=29-343, A/B/C/D=410-457"/>
</dbReference>
<dbReference type="PDB" id="8DN3">
    <property type="method" value="EM"/>
    <property type="resolution" value="3.55 A"/>
    <property type="chains" value="A/B/C/D=29-457"/>
</dbReference>
<dbReference type="PDB" id="8DN4">
    <property type="method" value="EM"/>
    <property type="resolution" value="4.10 A"/>
    <property type="chains" value="A/B/C/D=30-341, A/B/C/D=410-457"/>
</dbReference>
<dbReference type="PDB" id="8DN5">
    <property type="method" value="EM"/>
    <property type="resolution" value="3.63 A"/>
    <property type="chains" value="A/B/C/D=30-341, A/B/C/D=410-457"/>
</dbReference>
<dbReference type="PDBsum" id="1MOT"/>
<dbReference type="PDBsum" id="1VRY"/>
<dbReference type="PDBsum" id="2M6B"/>
<dbReference type="PDBsum" id="2M6I"/>
<dbReference type="PDBsum" id="4X5T"/>
<dbReference type="PDBsum" id="8DN2"/>
<dbReference type="PDBsum" id="8DN3"/>
<dbReference type="PDBsum" id="8DN4"/>
<dbReference type="PDBsum" id="8DN5"/>
<dbReference type="BMRB" id="P23415"/>
<dbReference type="EMDB" id="EMD-27552"/>
<dbReference type="EMDB" id="EMD-27553"/>
<dbReference type="EMDB" id="EMD-27554"/>
<dbReference type="EMDB" id="EMD-27555"/>
<dbReference type="SMR" id="P23415"/>
<dbReference type="BioGRID" id="109003">
    <property type="interactions" value="3"/>
</dbReference>
<dbReference type="ComplexPortal" id="CPX-7841">
    <property type="entry name" value="Glycine receptor complex, GLRA1-GLRB"/>
</dbReference>
<dbReference type="CORUM" id="P23415"/>
<dbReference type="DIP" id="DIP-48768N"/>
<dbReference type="FunCoup" id="P23415">
    <property type="interactions" value="977"/>
</dbReference>
<dbReference type="IntAct" id="P23415">
    <property type="interactions" value="3"/>
</dbReference>
<dbReference type="MINT" id="P23415"/>
<dbReference type="STRING" id="9606.ENSP00000411593"/>
<dbReference type="BindingDB" id="P23415"/>
<dbReference type="ChEMBL" id="CHEMBL5845"/>
<dbReference type="DrugBank" id="DB00572">
    <property type="generic name" value="Atropine"/>
</dbReference>
<dbReference type="DrugBank" id="DB09061">
    <property type="generic name" value="Cannabidiol"/>
</dbReference>
<dbReference type="DrugBank" id="DB09130">
    <property type="generic name" value="Copper"/>
</dbReference>
<dbReference type="DrugBank" id="DB03929">
    <property type="generic name" value="D-Serine"/>
</dbReference>
<dbReference type="DrugBank" id="DB01189">
    <property type="generic name" value="Desflurane"/>
</dbReference>
<dbReference type="DrugBank" id="DB00228">
    <property type="generic name" value="Enflurane"/>
</dbReference>
<dbReference type="DrugBank" id="DB00898">
    <property type="generic name" value="Ethanol"/>
</dbReference>
<dbReference type="DrugBank" id="DB06741">
    <property type="generic name" value="Gavestinel"/>
</dbReference>
<dbReference type="DrugBank" id="DB01381">
    <property type="generic name" value="Ginkgo biloba"/>
</dbReference>
<dbReference type="DrugBank" id="DB06743">
    <property type="generic name" value="Ginkgolide A"/>
</dbReference>
<dbReference type="DrugBank" id="DB00145">
    <property type="generic name" value="Glycine"/>
</dbReference>
<dbReference type="DrugBank" id="DB05417">
    <property type="generic name" value="GW 468816"/>
</dbReference>
<dbReference type="DrugBank" id="DB01159">
    <property type="generic name" value="Halothane"/>
</dbReference>
<dbReference type="DrugBank" id="DB00753">
    <property type="generic name" value="Isoflurane"/>
</dbReference>
<dbReference type="DrugBank" id="DB00431">
    <property type="generic name" value="Lindane"/>
</dbReference>
<dbReference type="DrugBank" id="DB14009">
    <property type="generic name" value="Medical Cannabis"/>
</dbReference>
<dbReference type="DrugBank" id="DB01028">
    <property type="generic name" value="Methoxyflurane"/>
</dbReference>
<dbReference type="DrugBank" id="DB14011">
    <property type="generic name" value="Nabiximols"/>
</dbReference>
<dbReference type="DrugBank" id="DB00466">
    <property type="generic name" value="Picrotoxin"/>
</dbReference>
<dbReference type="DrugBank" id="DB05885">
    <property type="generic name" value="Seletracetam"/>
</dbReference>
<dbReference type="DrugBank" id="DB01236">
    <property type="generic name" value="Sevoflurane"/>
</dbReference>
<dbReference type="DrugBank" id="DB15954">
    <property type="generic name" value="Strychnine"/>
</dbReference>
<dbReference type="DrugBank" id="DB01956">
    <property type="generic name" value="Taurine"/>
</dbReference>
<dbReference type="DrugBank" id="DB11582">
    <property type="generic name" value="Thiocolchicoside"/>
</dbReference>
<dbReference type="DrugBank" id="DB01593">
    <property type="generic name" value="Zinc"/>
</dbReference>
<dbReference type="DrugBank" id="DB14487">
    <property type="generic name" value="Zinc acetate"/>
</dbReference>
<dbReference type="DrugBank" id="DB14533">
    <property type="generic name" value="Zinc chloride"/>
</dbReference>
<dbReference type="DrugBank" id="DB14548">
    <property type="generic name" value="Zinc sulfate, unspecified form"/>
</dbReference>
<dbReference type="DrugCentral" id="P23415"/>
<dbReference type="GuidetoPHARMACOLOGY" id="423"/>
<dbReference type="TCDB" id="1.A.9.3.1">
    <property type="family name" value="the neurotransmitter receptor, cys loop, ligand-gated ion channel (lic) family"/>
</dbReference>
<dbReference type="GlyCosmos" id="P23415">
    <property type="glycosylation" value="1 site, No reported glycans"/>
</dbReference>
<dbReference type="GlyGen" id="P23415">
    <property type="glycosylation" value="1 site"/>
</dbReference>
<dbReference type="iPTMnet" id="P23415"/>
<dbReference type="PhosphoSitePlus" id="P23415"/>
<dbReference type="BioMuta" id="GLRA1"/>
<dbReference type="DMDM" id="116242495"/>
<dbReference type="MassIVE" id="P23415"/>
<dbReference type="PaxDb" id="9606-ENSP00000411593"/>
<dbReference type="PeptideAtlas" id="P23415"/>
<dbReference type="ProteomicsDB" id="54089">
    <molecule id="P23415-1"/>
</dbReference>
<dbReference type="ProteomicsDB" id="54090">
    <molecule id="P23415-2"/>
</dbReference>
<dbReference type="Antibodypedia" id="3089">
    <property type="antibodies" value="402 antibodies from 35 providers"/>
</dbReference>
<dbReference type="DNASU" id="2741"/>
<dbReference type="Ensembl" id="ENST00000274576.9">
    <molecule id="P23415-2"/>
    <property type="protein sequence ID" value="ENSP00000274576.5"/>
    <property type="gene ID" value="ENSG00000145888.11"/>
</dbReference>
<dbReference type="Ensembl" id="ENST00000455880.2">
    <molecule id="P23415-1"/>
    <property type="protein sequence ID" value="ENSP00000411593.2"/>
    <property type="gene ID" value="ENSG00000145888.11"/>
</dbReference>
<dbReference type="GeneID" id="2741"/>
<dbReference type="KEGG" id="hsa:2741"/>
<dbReference type="MANE-Select" id="ENST00000274576.9">
    <molecule id="P23415-2"/>
    <property type="protein sequence ID" value="ENSP00000274576.5"/>
    <property type="RefSeq nucleotide sequence ID" value="NM_000171.4"/>
    <property type="RefSeq protein sequence ID" value="NP_000162.2"/>
</dbReference>
<dbReference type="UCSC" id="uc003lur.4">
    <molecule id="P23415-1"/>
    <property type="organism name" value="human"/>
</dbReference>
<dbReference type="AGR" id="HGNC:4326"/>
<dbReference type="CTD" id="2741"/>
<dbReference type="DisGeNET" id="2741"/>
<dbReference type="GeneCards" id="GLRA1"/>
<dbReference type="GeneReviews" id="GLRA1"/>
<dbReference type="HGNC" id="HGNC:4326">
    <property type="gene designation" value="GLRA1"/>
</dbReference>
<dbReference type="HPA" id="ENSG00000145888">
    <property type="expression patterns" value="Tissue enriched (retina)"/>
</dbReference>
<dbReference type="MalaCards" id="GLRA1"/>
<dbReference type="MIM" id="138491">
    <property type="type" value="gene"/>
</dbReference>
<dbReference type="MIM" id="149400">
    <property type="type" value="phenotype"/>
</dbReference>
<dbReference type="neXtProt" id="NX_P23415"/>
<dbReference type="OpenTargets" id="ENSG00000145888"/>
<dbReference type="Orphanet" id="3197">
    <property type="disease" value="Hereditary hyperekplexia"/>
</dbReference>
<dbReference type="PharmGKB" id="PA28727"/>
<dbReference type="VEuPathDB" id="HostDB:ENSG00000145888"/>
<dbReference type="eggNOG" id="KOG3644">
    <property type="taxonomic scope" value="Eukaryota"/>
</dbReference>
<dbReference type="GeneTree" id="ENSGT00940000159047"/>
<dbReference type="HOGENOM" id="CLU_010920_1_4_1"/>
<dbReference type="InParanoid" id="P23415"/>
<dbReference type="OMA" id="CELHMQP"/>
<dbReference type="OrthoDB" id="407674at2759"/>
<dbReference type="PAN-GO" id="P23415">
    <property type="GO annotations" value="13 GO annotations based on evolutionary models"/>
</dbReference>
<dbReference type="PhylomeDB" id="P23415"/>
<dbReference type="TreeFam" id="TF315453"/>
<dbReference type="PathwayCommons" id="P23415"/>
<dbReference type="Reactome" id="R-HSA-112314">
    <property type="pathway name" value="Neurotransmitter receptors and postsynaptic signal transmission"/>
</dbReference>
<dbReference type="SignaLink" id="P23415"/>
<dbReference type="SIGNOR" id="P23415"/>
<dbReference type="BioGRID-ORCS" id="2741">
    <property type="hits" value="11 hits in 1154 CRISPR screens"/>
</dbReference>
<dbReference type="ChiTaRS" id="GLRA1">
    <property type="organism name" value="human"/>
</dbReference>
<dbReference type="EvolutionaryTrace" id="P23415"/>
<dbReference type="GeneWiki" id="Glycine_receptor,_alpha_1"/>
<dbReference type="GenomeRNAi" id="2741"/>
<dbReference type="Pharos" id="P23415">
    <property type="development level" value="Tclin"/>
</dbReference>
<dbReference type="PRO" id="PR:P23415"/>
<dbReference type="Proteomes" id="UP000005640">
    <property type="component" value="Chromosome 5"/>
</dbReference>
<dbReference type="RNAct" id="P23415">
    <property type="molecule type" value="protein"/>
</dbReference>
<dbReference type="Bgee" id="ENSG00000145888">
    <property type="expression patterns" value="Expressed in islet of Langerhans and 22 other cell types or tissues"/>
</dbReference>
<dbReference type="ExpressionAtlas" id="P23415">
    <property type="expression patterns" value="baseline and differential"/>
</dbReference>
<dbReference type="GO" id="GO:0034707">
    <property type="term" value="C:chloride channel complex"/>
    <property type="evidence" value="ECO:0007669"/>
    <property type="project" value="UniProtKB-KW"/>
</dbReference>
<dbReference type="GO" id="GO:0030425">
    <property type="term" value="C:dendrite"/>
    <property type="evidence" value="ECO:0007669"/>
    <property type="project" value="UniProtKB-SubCell"/>
</dbReference>
<dbReference type="GO" id="GO:0009897">
    <property type="term" value="C:external side of plasma membrane"/>
    <property type="evidence" value="ECO:0007669"/>
    <property type="project" value="Ensembl"/>
</dbReference>
<dbReference type="GO" id="GO:0098690">
    <property type="term" value="C:glycinergic synapse"/>
    <property type="evidence" value="ECO:0007669"/>
    <property type="project" value="Ensembl"/>
</dbReference>
<dbReference type="GO" id="GO:0060077">
    <property type="term" value="C:inhibitory synapse"/>
    <property type="evidence" value="ECO:0007669"/>
    <property type="project" value="Ensembl"/>
</dbReference>
<dbReference type="GO" id="GO:0043231">
    <property type="term" value="C:intracellular membrane-bounded organelle"/>
    <property type="evidence" value="ECO:0000314"/>
    <property type="project" value="HPA"/>
</dbReference>
<dbReference type="GO" id="GO:0016020">
    <property type="term" value="C:membrane"/>
    <property type="evidence" value="ECO:0000303"/>
    <property type="project" value="UniProtKB"/>
</dbReference>
<dbReference type="GO" id="GO:0043005">
    <property type="term" value="C:neuron projection"/>
    <property type="evidence" value="ECO:0000250"/>
    <property type="project" value="UniProtKB"/>
</dbReference>
<dbReference type="GO" id="GO:0043025">
    <property type="term" value="C:neuronal cell body"/>
    <property type="evidence" value="ECO:0000250"/>
    <property type="project" value="UniProtKB"/>
</dbReference>
<dbReference type="GO" id="GO:0043204">
    <property type="term" value="C:perikaryon"/>
    <property type="evidence" value="ECO:0007669"/>
    <property type="project" value="UniProtKB-SubCell"/>
</dbReference>
<dbReference type="GO" id="GO:0005886">
    <property type="term" value="C:plasma membrane"/>
    <property type="evidence" value="ECO:0000314"/>
    <property type="project" value="HPA"/>
</dbReference>
<dbReference type="GO" id="GO:0045211">
    <property type="term" value="C:postsynaptic membrane"/>
    <property type="evidence" value="ECO:0007669"/>
    <property type="project" value="UniProtKB-SubCell"/>
</dbReference>
<dbReference type="GO" id="GO:0045202">
    <property type="term" value="C:synapse"/>
    <property type="evidence" value="ECO:0000250"/>
    <property type="project" value="UniProtKB"/>
</dbReference>
<dbReference type="GO" id="GO:0016934">
    <property type="term" value="F:extracellularly glycine-gated chloride channel activity"/>
    <property type="evidence" value="ECO:0000314"/>
    <property type="project" value="UniProtKB"/>
</dbReference>
<dbReference type="GO" id="GO:0016594">
    <property type="term" value="F:glycine binding"/>
    <property type="evidence" value="ECO:0000314"/>
    <property type="project" value="UniProtKB"/>
</dbReference>
<dbReference type="GO" id="GO:0042802">
    <property type="term" value="F:identical protein binding"/>
    <property type="evidence" value="ECO:0000353"/>
    <property type="project" value="IntAct"/>
</dbReference>
<dbReference type="GO" id="GO:0099507">
    <property type="term" value="F:ligand-gated monoatomic ion channel activity involved in regulation of presynaptic membrane potential"/>
    <property type="evidence" value="ECO:0000314"/>
    <property type="project" value="SynGO"/>
</dbReference>
<dbReference type="GO" id="GO:0030977">
    <property type="term" value="F:taurine binding"/>
    <property type="evidence" value="ECO:0000314"/>
    <property type="project" value="UniProtKB"/>
</dbReference>
<dbReference type="GO" id="GO:0004888">
    <property type="term" value="F:transmembrane signaling receptor activity"/>
    <property type="evidence" value="ECO:0007669"/>
    <property type="project" value="InterPro"/>
</dbReference>
<dbReference type="GO" id="GO:1904315">
    <property type="term" value="F:transmitter-gated monoatomic ion channel activity involved in regulation of postsynaptic membrane potential"/>
    <property type="evidence" value="ECO:0007669"/>
    <property type="project" value="Ensembl"/>
</dbReference>
<dbReference type="GO" id="GO:0008270">
    <property type="term" value="F:zinc ion binding"/>
    <property type="evidence" value="ECO:0000315"/>
    <property type="project" value="UniProtKB"/>
</dbReference>
<dbReference type="GO" id="GO:0007340">
    <property type="term" value="P:acrosome reaction"/>
    <property type="evidence" value="ECO:0007669"/>
    <property type="project" value="Ensembl"/>
</dbReference>
<dbReference type="GO" id="GO:0007628">
    <property type="term" value="P:adult walking behavior"/>
    <property type="evidence" value="ECO:0007669"/>
    <property type="project" value="Ensembl"/>
</dbReference>
<dbReference type="GO" id="GO:0071230">
    <property type="term" value="P:cellular response to amino acid stimulus"/>
    <property type="evidence" value="ECO:0000314"/>
    <property type="project" value="UniProtKB"/>
</dbReference>
<dbReference type="GO" id="GO:0071361">
    <property type="term" value="P:cellular response to ethanol"/>
    <property type="evidence" value="ECO:0000314"/>
    <property type="project" value="UniProtKB"/>
</dbReference>
<dbReference type="GO" id="GO:0071294">
    <property type="term" value="P:cellular response to zinc ion"/>
    <property type="evidence" value="ECO:0000314"/>
    <property type="project" value="UniProtKB"/>
</dbReference>
<dbReference type="GO" id="GO:1902476">
    <property type="term" value="P:chloride transmembrane transport"/>
    <property type="evidence" value="ECO:0000314"/>
    <property type="project" value="UniProtKB"/>
</dbReference>
<dbReference type="GO" id="GO:0006821">
    <property type="term" value="P:chloride transport"/>
    <property type="evidence" value="ECO:0000314"/>
    <property type="project" value="UniProtKB"/>
</dbReference>
<dbReference type="GO" id="GO:0060080">
    <property type="term" value="P:inhibitory postsynaptic potential"/>
    <property type="evidence" value="ECO:0000250"/>
    <property type="project" value="UniProtKB"/>
</dbReference>
<dbReference type="GO" id="GO:0006811">
    <property type="term" value="P:monoatomic ion transport"/>
    <property type="evidence" value="ECO:0000314"/>
    <property type="project" value="UniProtKB"/>
</dbReference>
<dbReference type="GO" id="GO:0006936">
    <property type="term" value="P:muscle contraction"/>
    <property type="evidence" value="ECO:0000315"/>
    <property type="project" value="UniProtKB"/>
</dbReference>
<dbReference type="GO" id="GO:0051970">
    <property type="term" value="P:negative regulation of transmission of nerve impulse"/>
    <property type="evidence" value="ECO:0000315"/>
    <property type="project" value="UniProtKB"/>
</dbReference>
<dbReference type="GO" id="GO:0050884">
    <property type="term" value="P:neuromuscular process controlling posture"/>
    <property type="evidence" value="ECO:0007669"/>
    <property type="project" value="Ensembl"/>
</dbReference>
<dbReference type="GO" id="GO:0019228">
    <property type="term" value="P:neuronal action potential"/>
    <property type="evidence" value="ECO:0007669"/>
    <property type="project" value="Ensembl"/>
</dbReference>
<dbReference type="GO" id="GO:0007218">
    <property type="term" value="P:neuropeptide signaling pathway"/>
    <property type="evidence" value="ECO:0000314"/>
    <property type="project" value="UniProtKB"/>
</dbReference>
<dbReference type="GO" id="GO:2000344">
    <property type="term" value="P:positive regulation of acrosome reaction"/>
    <property type="evidence" value="ECO:0000315"/>
    <property type="project" value="UniProtKB"/>
</dbReference>
<dbReference type="GO" id="GO:0042391">
    <property type="term" value="P:regulation of membrane potential"/>
    <property type="evidence" value="ECO:0000315"/>
    <property type="project" value="MGI"/>
</dbReference>
<dbReference type="GO" id="GO:0002087">
    <property type="term" value="P:regulation of respiratory gaseous exchange by nervous system process"/>
    <property type="evidence" value="ECO:0007669"/>
    <property type="project" value="Ensembl"/>
</dbReference>
<dbReference type="GO" id="GO:0097305">
    <property type="term" value="P:response to alcohol"/>
    <property type="evidence" value="ECO:0000250"/>
    <property type="project" value="UniProtKB"/>
</dbReference>
<dbReference type="GO" id="GO:0060013">
    <property type="term" value="P:righting reflex"/>
    <property type="evidence" value="ECO:0007669"/>
    <property type="project" value="Ensembl"/>
</dbReference>
<dbReference type="GO" id="GO:0001964">
    <property type="term" value="P:startle response"/>
    <property type="evidence" value="ECO:0000315"/>
    <property type="project" value="UniProtKB"/>
</dbReference>
<dbReference type="GO" id="GO:0060012">
    <property type="term" value="P:synaptic transmission, glycinergic"/>
    <property type="evidence" value="ECO:0000250"/>
    <property type="project" value="UniProtKB"/>
</dbReference>
<dbReference type="GO" id="GO:0007601">
    <property type="term" value="P:visual perception"/>
    <property type="evidence" value="ECO:0007669"/>
    <property type="project" value="Ensembl"/>
</dbReference>
<dbReference type="CDD" id="cd19009">
    <property type="entry name" value="LGIC_ECD_GlyR_alpha"/>
    <property type="match status" value="1"/>
</dbReference>
<dbReference type="CDD" id="cd19060">
    <property type="entry name" value="LGIC_TM_GlyR_alpha"/>
    <property type="match status" value="1"/>
</dbReference>
<dbReference type="FunFam" id="2.70.170.10:FF:000002">
    <property type="entry name" value="Glycine receptor alpha 1 subunit"/>
    <property type="match status" value="1"/>
</dbReference>
<dbReference type="FunFam" id="1.20.58.390:FF:000003">
    <property type="entry name" value="Glycine receptor alpha 2 subunit"/>
    <property type="match status" value="1"/>
</dbReference>
<dbReference type="Gene3D" id="2.70.170.10">
    <property type="entry name" value="Neurotransmitter-gated ion-channel ligand-binding domain"/>
    <property type="match status" value="1"/>
</dbReference>
<dbReference type="Gene3D" id="1.20.58.390">
    <property type="entry name" value="Neurotransmitter-gated ion-channel transmembrane domain"/>
    <property type="match status" value="1"/>
</dbReference>
<dbReference type="InterPro" id="IPR006028">
    <property type="entry name" value="GABAA/Glycine_rcpt"/>
</dbReference>
<dbReference type="InterPro" id="IPR008127">
    <property type="entry name" value="Glycine_rcpt_A"/>
</dbReference>
<dbReference type="InterPro" id="IPR008128">
    <property type="entry name" value="Glycine_rcpt_A1"/>
</dbReference>
<dbReference type="InterPro" id="IPR006202">
    <property type="entry name" value="Neur_chan_lig-bd"/>
</dbReference>
<dbReference type="InterPro" id="IPR036734">
    <property type="entry name" value="Neur_chan_lig-bd_sf"/>
</dbReference>
<dbReference type="InterPro" id="IPR006201">
    <property type="entry name" value="Neur_channel"/>
</dbReference>
<dbReference type="InterPro" id="IPR036719">
    <property type="entry name" value="Neuro-gated_channel_TM_sf"/>
</dbReference>
<dbReference type="InterPro" id="IPR038050">
    <property type="entry name" value="Neuro_actylchol_rec"/>
</dbReference>
<dbReference type="InterPro" id="IPR006029">
    <property type="entry name" value="Neurotrans-gated_channel_TM"/>
</dbReference>
<dbReference type="InterPro" id="IPR018000">
    <property type="entry name" value="Neurotransmitter_ion_chnl_CS"/>
</dbReference>
<dbReference type="NCBIfam" id="TIGR00860">
    <property type="entry name" value="LIC"/>
    <property type="match status" value="1"/>
</dbReference>
<dbReference type="PANTHER" id="PTHR18945">
    <property type="entry name" value="NEUROTRANSMITTER GATED ION CHANNEL"/>
    <property type="match status" value="1"/>
</dbReference>
<dbReference type="Pfam" id="PF02931">
    <property type="entry name" value="Neur_chan_LBD"/>
    <property type="match status" value="1"/>
</dbReference>
<dbReference type="Pfam" id="PF02932">
    <property type="entry name" value="Neur_chan_memb"/>
    <property type="match status" value="1"/>
</dbReference>
<dbReference type="PRINTS" id="PR00253">
    <property type="entry name" value="GABAARECEPTR"/>
</dbReference>
<dbReference type="PRINTS" id="PR01673">
    <property type="entry name" value="GLYRALPHA"/>
</dbReference>
<dbReference type="PRINTS" id="PR01674">
    <property type="entry name" value="GLYRALPHA1"/>
</dbReference>
<dbReference type="PRINTS" id="PR00252">
    <property type="entry name" value="NRIONCHANNEL"/>
</dbReference>
<dbReference type="SUPFAM" id="SSF90112">
    <property type="entry name" value="Neurotransmitter-gated ion-channel transmembrane pore"/>
    <property type="match status" value="1"/>
</dbReference>
<dbReference type="SUPFAM" id="SSF63712">
    <property type="entry name" value="Nicotinic receptor ligand binding domain-like"/>
    <property type="match status" value="1"/>
</dbReference>
<dbReference type="PROSITE" id="PS00236">
    <property type="entry name" value="NEUROTR_ION_CHANNEL"/>
    <property type="match status" value="1"/>
</dbReference>
<name>GLRA1_HUMAN</name>
<evidence type="ECO:0000250" key="1">
    <source>
        <dbReference type="UniProtKB" id="O93430"/>
    </source>
</evidence>
<evidence type="ECO:0000250" key="2">
    <source>
        <dbReference type="UniProtKB" id="P07727"/>
    </source>
</evidence>
<evidence type="ECO:0000250" key="3">
    <source>
        <dbReference type="UniProtKB" id="Q64018"/>
    </source>
</evidence>
<evidence type="ECO:0000255" key="4"/>
<evidence type="ECO:0000256" key="5">
    <source>
        <dbReference type="SAM" id="MobiDB-lite"/>
    </source>
</evidence>
<evidence type="ECO:0000269" key="6">
    <source>
    </source>
</evidence>
<evidence type="ECO:0000269" key="7">
    <source>
    </source>
</evidence>
<evidence type="ECO:0000269" key="8">
    <source>
    </source>
</evidence>
<evidence type="ECO:0000269" key="9">
    <source>
    </source>
</evidence>
<evidence type="ECO:0000269" key="10">
    <source>
    </source>
</evidence>
<evidence type="ECO:0000269" key="11">
    <source>
    </source>
</evidence>
<evidence type="ECO:0000269" key="12">
    <source>
    </source>
</evidence>
<evidence type="ECO:0000269" key="13">
    <source>
    </source>
</evidence>
<evidence type="ECO:0000269" key="14">
    <source>
    </source>
</evidence>
<evidence type="ECO:0000269" key="15">
    <source>
    </source>
</evidence>
<evidence type="ECO:0000269" key="16">
    <source>
    </source>
</evidence>
<evidence type="ECO:0000269" key="17">
    <source>
    </source>
</evidence>
<evidence type="ECO:0000269" key="18">
    <source>
    </source>
</evidence>
<evidence type="ECO:0000269" key="19">
    <source>
    </source>
</evidence>
<evidence type="ECO:0000269" key="20">
    <source>
    </source>
</evidence>
<evidence type="ECO:0000269" key="21">
    <source>
    </source>
</evidence>
<evidence type="ECO:0000269" key="22">
    <source>
    </source>
</evidence>
<evidence type="ECO:0000269" key="23">
    <source>
    </source>
</evidence>
<evidence type="ECO:0000269" key="24">
    <source>
    </source>
</evidence>
<evidence type="ECO:0000269" key="25">
    <source>
    </source>
</evidence>
<evidence type="ECO:0000269" key="26">
    <source>
    </source>
</evidence>
<evidence type="ECO:0000269" key="27">
    <source>
    </source>
</evidence>
<evidence type="ECO:0000269" key="28">
    <source>
    </source>
</evidence>
<evidence type="ECO:0000269" key="29">
    <source>
    </source>
</evidence>
<evidence type="ECO:0000269" key="30">
    <source>
    </source>
</evidence>
<evidence type="ECO:0000269" key="31">
    <source ref="20"/>
</evidence>
<evidence type="ECO:0000303" key="32">
    <source>
    </source>
</evidence>
<evidence type="ECO:0000303" key="33">
    <source>
    </source>
</evidence>
<evidence type="ECO:0000303" key="34">
    <source>
    </source>
</evidence>
<evidence type="ECO:0000305" key="35"/>
<evidence type="ECO:0000305" key="36">
    <source>
    </source>
</evidence>
<evidence type="ECO:0000305" key="37">
    <source>
    </source>
</evidence>
<evidence type="ECO:0000305" key="38">
    <source>
    </source>
</evidence>
<evidence type="ECO:0007744" key="39">
    <source>
        <dbReference type="PDB" id="8DN2"/>
    </source>
</evidence>
<evidence type="ECO:0007744" key="40">
    <source>
        <dbReference type="PDB" id="8DN3"/>
    </source>
</evidence>
<evidence type="ECO:0007744" key="41">
    <source>
        <dbReference type="PDB" id="8DN4"/>
    </source>
</evidence>
<evidence type="ECO:0007744" key="42">
    <source>
        <dbReference type="PDB" id="8DN5"/>
    </source>
</evidence>
<evidence type="ECO:0007829" key="43">
    <source>
        <dbReference type="PDB" id="2M6B"/>
    </source>
</evidence>
<evidence type="ECO:0007829" key="44">
    <source>
        <dbReference type="PDB" id="4X5T"/>
    </source>
</evidence>
<gene>
    <name type="primary">GLRA1</name>
</gene>